<comment type="catalytic activity">
    <reaction>
        <text>N-acetyl-alpha-D-glucosamine 1-phosphate + UTP + H(+) = UDP-N-acetyl-alpha-D-glucosamine + diphosphate</text>
        <dbReference type="Rhea" id="RHEA:13509"/>
        <dbReference type="ChEBI" id="CHEBI:15378"/>
        <dbReference type="ChEBI" id="CHEBI:33019"/>
        <dbReference type="ChEBI" id="CHEBI:46398"/>
        <dbReference type="ChEBI" id="CHEBI:57705"/>
        <dbReference type="ChEBI" id="CHEBI:57776"/>
        <dbReference type="EC" id="2.7.7.23"/>
    </reaction>
</comment>
<comment type="pathway">
    <text>Nucleotide-sugar biosynthesis; UDP-N-acetyl-alpha-D-glucosamine biosynthesis; UDP-N-acetyl-alpha-D-glucosamine from N-acetyl-alpha-D-glucosamine 1-phosphate: step 1/1.</text>
</comment>
<accession>Q5UNV4</accession>
<proteinExistence type="predicted"/>
<sequence>MGKTNVSHKLYITLLAGGMGKRMQSNLPKVLHKVNGETMIVRLMKQVIKLNPDKILVVVGKFYSEISSEIKQHINDNRIEFVVQKEPLGTGDAVKCTLPLLINDNIDNIILNGDVPMIQHSTIKNIYNYYLETKSKLLITSIHLSNPTGCGRIILDENFGFSEIIEEKDCTEDQKKLTLVNCGIYVCNSKILKQSIPQISNNNSQKEYYLTDLVKIYNNEPSNNINLFILPRNKEIEIYNINTKEQLEYIESVSK</sequence>
<keyword id="KW-0548">Nucleotidyltransferase</keyword>
<keyword id="KW-1185">Reference proteome</keyword>
<keyword id="KW-0808">Transferase</keyword>
<name>UNAP_MIMIV</name>
<organismHost>
    <name type="scientific">Acanthamoeba polyphaga</name>
    <name type="common">Amoeba</name>
    <dbReference type="NCBI Taxonomy" id="5757"/>
</organismHost>
<gene>
    <name type="ordered locus">MIMI_R689</name>
</gene>
<dbReference type="EC" id="2.7.7.23"/>
<dbReference type="EMBL" id="AY653733">
    <property type="protein sequence ID" value="AAV50950.1"/>
    <property type="molecule type" value="Genomic_DNA"/>
</dbReference>
<dbReference type="SMR" id="Q5UNV4"/>
<dbReference type="KEGG" id="vg:9925340"/>
<dbReference type="OrthoDB" id="30955at10239"/>
<dbReference type="UniPathway" id="UPA00113">
    <property type="reaction ID" value="UER00533"/>
</dbReference>
<dbReference type="Proteomes" id="UP000001134">
    <property type="component" value="Genome"/>
</dbReference>
<dbReference type="GO" id="GO:0003977">
    <property type="term" value="F:UDP-N-acetylglucosamine diphosphorylase activity"/>
    <property type="evidence" value="ECO:0007669"/>
    <property type="project" value="UniProtKB-EC"/>
</dbReference>
<dbReference type="GO" id="GO:0006048">
    <property type="term" value="P:UDP-N-acetylglucosamine biosynthetic process"/>
    <property type="evidence" value="ECO:0007669"/>
    <property type="project" value="UniProtKB-UniPathway"/>
</dbReference>
<dbReference type="CDD" id="cd02540">
    <property type="entry name" value="GT2_GlmU_N_bac"/>
    <property type="match status" value="1"/>
</dbReference>
<dbReference type="Gene3D" id="3.90.550.10">
    <property type="entry name" value="Spore Coat Polysaccharide Biosynthesis Protein SpsA, Chain A"/>
    <property type="match status" value="1"/>
</dbReference>
<dbReference type="InterPro" id="IPR050065">
    <property type="entry name" value="GlmU-like"/>
</dbReference>
<dbReference type="InterPro" id="IPR005835">
    <property type="entry name" value="NTP_transferase_dom"/>
</dbReference>
<dbReference type="InterPro" id="IPR029044">
    <property type="entry name" value="Nucleotide-diphossugar_trans"/>
</dbReference>
<dbReference type="PANTHER" id="PTHR43584:SF3">
    <property type="entry name" value="BIFUNCTIONAL PROTEIN GLMU"/>
    <property type="match status" value="1"/>
</dbReference>
<dbReference type="PANTHER" id="PTHR43584">
    <property type="entry name" value="NUCLEOTIDYL TRANSFERASE"/>
    <property type="match status" value="1"/>
</dbReference>
<dbReference type="Pfam" id="PF00483">
    <property type="entry name" value="NTP_transferase"/>
    <property type="match status" value="1"/>
</dbReference>
<dbReference type="SUPFAM" id="SSF53448">
    <property type="entry name" value="Nucleotide-diphospho-sugar transferases"/>
    <property type="match status" value="1"/>
</dbReference>
<organism>
    <name type="scientific">Acanthamoeba polyphaga mimivirus</name>
    <name type="common">APMV</name>
    <dbReference type="NCBI Taxonomy" id="212035"/>
    <lineage>
        <taxon>Viruses</taxon>
        <taxon>Varidnaviria</taxon>
        <taxon>Bamfordvirae</taxon>
        <taxon>Nucleocytoviricota</taxon>
        <taxon>Megaviricetes</taxon>
        <taxon>Imitervirales</taxon>
        <taxon>Mimiviridae</taxon>
        <taxon>Megamimivirinae</taxon>
        <taxon>Mimivirus</taxon>
        <taxon>Mimivirus bradfordmassiliense</taxon>
    </lineage>
</organism>
<reference key="1">
    <citation type="journal article" date="2004" name="Science">
        <title>The 1.2-megabase genome sequence of Mimivirus.</title>
        <authorList>
            <person name="Raoult D."/>
            <person name="Audic S."/>
            <person name="Robert C."/>
            <person name="Abergel C."/>
            <person name="Renesto P."/>
            <person name="Ogata H."/>
            <person name="La Scola B."/>
            <person name="Susan M."/>
            <person name="Claverie J.-M."/>
        </authorList>
    </citation>
    <scope>NUCLEOTIDE SEQUENCE [LARGE SCALE GENOMIC DNA]</scope>
    <source>
        <strain>Rowbotham-Bradford</strain>
    </source>
</reference>
<protein>
    <recommendedName>
        <fullName>Probable UDP-N-acetylglucosamine pyrophosphorylase</fullName>
        <ecNumber>2.7.7.23</ecNumber>
    </recommendedName>
    <alternativeName>
        <fullName>N-acetylglucosamine-1-phosphate uridyltransferase</fullName>
    </alternativeName>
</protein>
<feature type="chain" id="PRO_0000071172" description="Probable UDP-N-acetylglucosamine pyrophosphorylase">
    <location>
        <begin position="1"/>
        <end position="255"/>
    </location>
</feature>